<protein>
    <recommendedName>
        <fullName evidence="1">NADH-quinone oxidoreductase subunit H</fullName>
        <ecNumber evidence="1">7.1.1.-</ecNumber>
    </recommendedName>
    <alternativeName>
        <fullName evidence="1">NADH dehydrogenase I subunit H</fullName>
    </alternativeName>
    <alternativeName>
        <fullName evidence="1">NDH-1 subunit H</fullName>
    </alternativeName>
</protein>
<sequence>MLGYILWTSLYVLLIVIPLILVVAYYTYAERKVIGYMQDRIGPNRVGSFGLLQPIFDALKLFLKEIIVPTNSNRYLFFIAPILAFAPAYAAWAVIPFSKGVVLSDMNLGLLYILAMTSFSIYGIVIAGWASNSKYSLFGALRAGAQVISYELAMGFAIVGVVIAAGSMGITGIIEAQSGGIWHWYFIPLFPLFIVYFIAGIAETNRAPFDVVEGESEIVAGHHIEYTGSRFALFFLAEYANMILISILTSIMFLGGWNSPFQATALESIFGFVPGVVWLFAKTGIFMFMFLWVRATYPRYRYDQIMRLGWKIFIPLTFVWVVIVACMVRLGVGPWW</sequence>
<reference key="1">
    <citation type="submission" date="2006-03" db="EMBL/GenBank/DDBJ databases">
        <title>Complete genome sequence of Francisella tularensis LVS (Live Vaccine Strain).</title>
        <authorList>
            <person name="Chain P."/>
            <person name="Larimer F."/>
            <person name="Land M."/>
            <person name="Stilwagen S."/>
            <person name="Larsson P."/>
            <person name="Bearden S."/>
            <person name="Chu M."/>
            <person name="Oyston P."/>
            <person name="Forsman M."/>
            <person name="Andersson S."/>
            <person name="Lindler L."/>
            <person name="Titball R."/>
            <person name="Garcia E."/>
        </authorList>
    </citation>
    <scope>NUCLEOTIDE SEQUENCE [LARGE SCALE GENOMIC DNA]</scope>
    <source>
        <strain>LVS</strain>
    </source>
</reference>
<dbReference type="EC" id="7.1.1.-" evidence="1"/>
<dbReference type="EMBL" id="AM233362">
    <property type="protein sequence ID" value="CAJ80262.1"/>
    <property type="molecule type" value="Genomic_DNA"/>
</dbReference>
<dbReference type="RefSeq" id="WP_003017378.1">
    <property type="nucleotide sequence ID" value="NZ_CP009694.1"/>
</dbReference>
<dbReference type="SMR" id="Q2A1F7"/>
<dbReference type="KEGG" id="ftl:FTL_1823"/>
<dbReference type="Proteomes" id="UP000001944">
    <property type="component" value="Chromosome"/>
</dbReference>
<dbReference type="GO" id="GO:0005886">
    <property type="term" value="C:plasma membrane"/>
    <property type="evidence" value="ECO:0007669"/>
    <property type="project" value="UniProtKB-SubCell"/>
</dbReference>
<dbReference type="GO" id="GO:0003954">
    <property type="term" value="F:NADH dehydrogenase activity"/>
    <property type="evidence" value="ECO:0007669"/>
    <property type="project" value="TreeGrafter"/>
</dbReference>
<dbReference type="GO" id="GO:0016655">
    <property type="term" value="F:oxidoreductase activity, acting on NAD(P)H, quinone or similar compound as acceptor"/>
    <property type="evidence" value="ECO:0007669"/>
    <property type="project" value="UniProtKB-UniRule"/>
</dbReference>
<dbReference type="GO" id="GO:0048038">
    <property type="term" value="F:quinone binding"/>
    <property type="evidence" value="ECO:0007669"/>
    <property type="project" value="UniProtKB-KW"/>
</dbReference>
<dbReference type="GO" id="GO:0009060">
    <property type="term" value="P:aerobic respiration"/>
    <property type="evidence" value="ECO:0007669"/>
    <property type="project" value="TreeGrafter"/>
</dbReference>
<dbReference type="HAMAP" id="MF_01350">
    <property type="entry name" value="NDH1_NuoH"/>
    <property type="match status" value="1"/>
</dbReference>
<dbReference type="InterPro" id="IPR001694">
    <property type="entry name" value="NADH_UbQ_OxRdtase_su1/FPO"/>
</dbReference>
<dbReference type="InterPro" id="IPR018086">
    <property type="entry name" value="NADH_UbQ_OxRdtase_su1_CS"/>
</dbReference>
<dbReference type="NCBIfam" id="NF004741">
    <property type="entry name" value="PRK06076.1-2"/>
    <property type="match status" value="1"/>
</dbReference>
<dbReference type="PANTHER" id="PTHR11432">
    <property type="entry name" value="NADH DEHYDROGENASE SUBUNIT 1"/>
    <property type="match status" value="1"/>
</dbReference>
<dbReference type="PANTHER" id="PTHR11432:SF3">
    <property type="entry name" value="NADH-UBIQUINONE OXIDOREDUCTASE CHAIN 1"/>
    <property type="match status" value="1"/>
</dbReference>
<dbReference type="Pfam" id="PF00146">
    <property type="entry name" value="NADHdh"/>
    <property type="match status" value="1"/>
</dbReference>
<dbReference type="PROSITE" id="PS00667">
    <property type="entry name" value="COMPLEX1_ND1_1"/>
    <property type="match status" value="1"/>
</dbReference>
<dbReference type="PROSITE" id="PS00668">
    <property type="entry name" value="COMPLEX1_ND1_2"/>
    <property type="match status" value="1"/>
</dbReference>
<feature type="chain" id="PRO_0000240071" description="NADH-quinone oxidoreductase subunit H">
    <location>
        <begin position="1"/>
        <end position="336"/>
    </location>
</feature>
<feature type="transmembrane region" description="Helical" evidence="1">
    <location>
        <begin position="4"/>
        <end position="24"/>
    </location>
</feature>
<feature type="transmembrane region" description="Helical" evidence="1">
    <location>
        <begin position="75"/>
        <end position="95"/>
    </location>
</feature>
<feature type="transmembrane region" description="Helical" evidence="1">
    <location>
        <begin position="108"/>
        <end position="128"/>
    </location>
</feature>
<feature type="transmembrane region" description="Helical" evidence="1">
    <location>
        <begin position="154"/>
        <end position="174"/>
    </location>
</feature>
<feature type="transmembrane region" description="Helical" evidence="1">
    <location>
        <begin position="181"/>
        <end position="201"/>
    </location>
</feature>
<feature type="transmembrane region" description="Helical" evidence="1">
    <location>
        <begin position="233"/>
        <end position="253"/>
    </location>
</feature>
<feature type="transmembrane region" description="Helical" evidence="1">
    <location>
        <begin position="272"/>
        <end position="292"/>
    </location>
</feature>
<feature type="transmembrane region" description="Helical" evidence="1">
    <location>
        <begin position="308"/>
        <end position="328"/>
    </location>
</feature>
<comment type="function">
    <text evidence="1">NDH-1 shuttles electrons from NADH, via FMN and iron-sulfur (Fe-S) centers, to quinones in the respiratory chain. The immediate electron acceptor for the enzyme in this species is believed to be ubiquinone. Couples the redox reaction to proton translocation (for every two electrons transferred, four hydrogen ions are translocated across the cytoplasmic membrane), and thus conserves the redox energy in a proton gradient. This subunit may bind ubiquinone.</text>
</comment>
<comment type="catalytic activity">
    <reaction evidence="1">
        <text>a quinone + NADH + 5 H(+)(in) = a quinol + NAD(+) + 4 H(+)(out)</text>
        <dbReference type="Rhea" id="RHEA:57888"/>
        <dbReference type="ChEBI" id="CHEBI:15378"/>
        <dbReference type="ChEBI" id="CHEBI:24646"/>
        <dbReference type="ChEBI" id="CHEBI:57540"/>
        <dbReference type="ChEBI" id="CHEBI:57945"/>
        <dbReference type="ChEBI" id="CHEBI:132124"/>
    </reaction>
</comment>
<comment type="subunit">
    <text evidence="1">NDH-1 is composed of 14 different subunits. Subunits NuoA, H, J, K, L, M, N constitute the membrane sector of the complex.</text>
</comment>
<comment type="subcellular location">
    <subcellularLocation>
        <location evidence="1">Cell inner membrane</location>
        <topology evidence="1">Multi-pass membrane protein</topology>
    </subcellularLocation>
</comment>
<comment type="similarity">
    <text evidence="1">Belongs to the complex I subunit 1 family.</text>
</comment>
<name>NUOH_FRATH</name>
<accession>Q2A1F7</accession>
<gene>
    <name evidence="1" type="primary">nuoH</name>
    <name type="ordered locus">FTL_1823</name>
</gene>
<proteinExistence type="inferred from homology"/>
<evidence type="ECO:0000255" key="1">
    <source>
        <dbReference type="HAMAP-Rule" id="MF_01350"/>
    </source>
</evidence>
<organism>
    <name type="scientific">Francisella tularensis subsp. holarctica (strain LVS)</name>
    <dbReference type="NCBI Taxonomy" id="376619"/>
    <lineage>
        <taxon>Bacteria</taxon>
        <taxon>Pseudomonadati</taxon>
        <taxon>Pseudomonadota</taxon>
        <taxon>Gammaproteobacteria</taxon>
        <taxon>Thiotrichales</taxon>
        <taxon>Francisellaceae</taxon>
        <taxon>Francisella</taxon>
    </lineage>
</organism>
<keyword id="KW-0997">Cell inner membrane</keyword>
<keyword id="KW-1003">Cell membrane</keyword>
<keyword id="KW-0472">Membrane</keyword>
<keyword id="KW-0520">NAD</keyword>
<keyword id="KW-0874">Quinone</keyword>
<keyword id="KW-1185">Reference proteome</keyword>
<keyword id="KW-1278">Translocase</keyword>
<keyword id="KW-0812">Transmembrane</keyword>
<keyword id="KW-1133">Transmembrane helix</keyword>
<keyword id="KW-0830">Ubiquinone</keyword>